<feature type="chain" id="PRO_0000297872" description="Flap endonuclease Xni">
    <location>
        <begin position="1"/>
        <end position="251"/>
    </location>
</feature>
<feature type="domain" description="5'-3' exonuclease" evidence="1">
    <location>
        <begin position="160"/>
        <end position="249"/>
    </location>
</feature>
<feature type="region of interest" description="Interaction with DNA" evidence="1">
    <location>
        <begin position="184"/>
        <end position="189"/>
    </location>
</feature>
<feature type="binding site" evidence="1">
    <location>
        <position position="104"/>
    </location>
    <ligand>
        <name>Mg(2+)</name>
        <dbReference type="ChEBI" id="CHEBI:18420"/>
    </ligand>
</feature>
<feature type="binding site" evidence="1">
    <location>
        <position position="171"/>
    </location>
    <ligand>
        <name>K(+)</name>
        <dbReference type="ChEBI" id="CHEBI:29103"/>
    </ligand>
</feature>
<feature type="binding site" evidence="1">
    <location>
        <position position="172"/>
    </location>
    <ligand>
        <name>K(+)</name>
        <dbReference type="ChEBI" id="CHEBI:29103"/>
    </ligand>
</feature>
<feature type="binding site" evidence="1">
    <location>
        <position position="180"/>
    </location>
    <ligand>
        <name>K(+)</name>
        <dbReference type="ChEBI" id="CHEBI:29103"/>
    </ligand>
</feature>
<feature type="binding site" evidence="1">
    <location>
        <position position="182"/>
    </location>
    <ligand>
        <name>K(+)</name>
        <dbReference type="ChEBI" id="CHEBI:29103"/>
    </ligand>
</feature>
<feature type="binding site" evidence="1">
    <location>
        <position position="185"/>
    </location>
    <ligand>
        <name>K(+)</name>
        <dbReference type="ChEBI" id="CHEBI:29103"/>
    </ligand>
</feature>
<accession>Q8ZMC9</accession>
<name>XNI_SALTY</name>
<dbReference type="EC" id="3.1.-.-" evidence="1"/>
<dbReference type="EMBL" id="AE006468">
    <property type="protein sequence ID" value="AAL21851.1"/>
    <property type="status" value="ALT_INIT"/>
    <property type="molecule type" value="Genomic_DNA"/>
</dbReference>
<dbReference type="RefSeq" id="WP_000881444.1">
    <property type="nucleotide sequence ID" value="NC_003197.2"/>
</dbReference>
<dbReference type="SMR" id="Q8ZMC9"/>
<dbReference type="STRING" id="99287.STM2972"/>
<dbReference type="PaxDb" id="99287-STM2972"/>
<dbReference type="KEGG" id="stm:STM2972"/>
<dbReference type="PATRIC" id="fig|99287.12.peg.3145"/>
<dbReference type="HOGENOM" id="CLU_004675_1_2_6"/>
<dbReference type="PhylomeDB" id="Q8ZMC9"/>
<dbReference type="Proteomes" id="UP000001014">
    <property type="component" value="Chromosome"/>
</dbReference>
<dbReference type="GO" id="GO:0008409">
    <property type="term" value="F:5'-3' exonuclease activity"/>
    <property type="evidence" value="ECO:0007669"/>
    <property type="project" value="InterPro"/>
</dbReference>
<dbReference type="GO" id="GO:0017108">
    <property type="term" value="F:5'-flap endonuclease activity"/>
    <property type="evidence" value="ECO:0000318"/>
    <property type="project" value="GO_Central"/>
</dbReference>
<dbReference type="GO" id="GO:0003677">
    <property type="term" value="F:DNA binding"/>
    <property type="evidence" value="ECO:0007669"/>
    <property type="project" value="UniProtKB-UniRule"/>
</dbReference>
<dbReference type="GO" id="GO:0000287">
    <property type="term" value="F:magnesium ion binding"/>
    <property type="evidence" value="ECO:0007669"/>
    <property type="project" value="UniProtKB-UniRule"/>
</dbReference>
<dbReference type="GO" id="GO:0030955">
    <property type="term" value="F:potassium ion binding"/>
    <property type="evidence" value="ECO:0007669"/>
    <property type="project" value="UniProtKB-UniRule"/>
</dbReference>
<dbReference type="GO" id="GO:0033567">
    <property type="term" value="P:DNA replication, Okazaki fragment processing"/>
    <property type="evidence" value="ECO:0000318"/>
    <property type="project" value="GO_Central"/>
</dbReference>
<dbReference type="CDD" id="cd09898">
    <property type="entry name" value="H3TH_53EXO"/>
    <property type="match status" value="1"/>
</dbReference>
<dbReference type="CDD" id="cd09859">
    <property type="entry name" value="PIN_53EXO"/>
    <property type="match status" value="1"/>
</dbReference>
<dbReference type="FunFam" id="1.10.150.20:FF:000003">
    <property type="entry name" value="DNA polymerase I"/>
    <property type="match status" value="1"/>
</dbReference>
<dbReference type="FunFam" id="3.40.50.1010:FF:000011">
    <property type="entry name" value="Flap endonuclease Xni"/>
    <property type="match status" value="1"/>
</dbReference>
<dbReference type="Gene3D" id="1.10.150.20">
    <property type="entry name" value="5' to 3' exonuclease, C-terminal subdomain"/>
    <property type="match status" value="1"/>
</dbReference>
<dbReference type="Gene3D" id="3.40.50.1010">
    <property type="entry name" value="5'-nuclease"/>
    <property type="match status" value="1"/>
</dbReference>
<dbReference type="HAMAP" id="MF_01192">
    <property type="entry name" value="Xni"/>
    <property type="match status" value="1"/>
</dbReference>
<dbReference type="InterPro" id="IPR020046">
    <property type="entry name" value="5-3_exonucl_a-hlix_arch_N"/>
</dbReference>
<dbReference type="InterPro" id="IPR002421">
    <property type="entry name" value="5-3_exonuclease"/>
</dbReference>
<dbReference type="InterPro" id="IPR036279">
    <property type="entry name" value="5-3_exonuclease_C_sf"/>
</dbReference>
<dbReference type="InterPro" id="IPR020045">
    <property type="entry name" value="DNA_polI_H3TH"/>
</dbReference>
<dbReference type="InterPro" id="IPR038969">
    <property type="entry name" value="FEN"/>
</dbReference>
<dbReference type="InterPro" id="IPR008918">
    <property type="entry name" value="HhH2"/>
</dbReference>
<dbReference type="InterPro" id="IPR029060">
    <property type="entry name" value="PIN-like_dom_sf"/>
</dbReference>
<dbReference type="InterPro" id="IPR022895">
    <property type="entry name" value="Xni"/>
</dbReference>
<dbReference type="NCBIfam" id="NF007017">
    <property type="entry name" value="PRK09482.1"/>
    <property type="match status" value="1"/>
</dbReference>
<dbReference type="PANTHER" id="PTHR42646:SF2">
    <property type="entry name" value="5'-3' EXONUCLEASE FAMILY PROTEIN"/>
    <property type="match status" value="1"/>
</dbReference>
<dbReference type="PANTHER" id="PTHR42646">
    <property type="entry name" value="FLAP ENDONUCLEASE XNI"/>
    <property type="match status" value="1"/>
</dbReference>
<dbReference type="Pfam" id="PF01367">
    <property type="entry name" value="5_3_exonuc"/>
    <property type="match status" value="1"/>
</dbReference>
<dbReference type="Pfam" id="PF02739">
    <property type="entry name" value="5_3_exonuc_N"/>
    <property type="match status" value="1"/>
</dbReference>
<dbReference type="SMART" id="SM00475">
    <property type="entry name" value="53EXOc"/>
    <property type="match status" value="1"/>
</dbReference>
<dbReference type="SMART" id="SM00279">
    <property type="entry name" value="HhH2"/>
    <property type="match status" value="1"/>
</dbReference>
<dbReference type="SUPFAM" id="SSF47807">
    <property type="entry name" value="5' to 3' exonuclease, C-terminal subdomain"/>
    <property type="match status" value="1"/>
</dbReference>
<dbReference type="SUPFAM" id="SSF88723">
    <property type="entry name" value="PIN domain-like"/>
    <property type="match status" value="1"/>
</dbReference>
<keyword id="KW-0238">DNA-binding</keyword>
<keyword id="KW-0255">Endonuclease</keyword>
<keyword id="KW-0378">Hydrolase</keyword>
<keyword id="KW-0460">Magnesium</keyword>
<keyword id="KW-0479">Metal-binding</keyword>
<keyword id="KW-0540">Nuclease</keyword>
<keyword id="KW-0630">Potassium</keyword>
<keyword id="KW-1185">Reference proteome</keyword>
<evidence type="ECO:0000255" key="1">
    <source>
        <dbReference type="HAMAP-Rule" id="MF_01192"/>
    </source>
</evidence>
<evidence type="ECO:0000305" key="2"/>
<proteinExistence type="inferred from homology"/>
<organism>
    <name type="scientific">Salmonella typhimurium (strain LT2 / SGSC1412 / ATCC 700720)</name>
    <dbReference type="NCBI Taxonomy" id="99287"/>
    <lineage>
        <taxon>Bacteria</taxon>
        <taxon>Pseudomonadati</taxon>
        <taxon>Pseudomonadota</taxon>
        <taxon>Gammaproteobacteria</taxon>
        <taxon>Enterobacterales</taxon>
        <taxon>Enterobacteriaceae</taxon>
        <taxon>Salmonella</taxon>
    </lineage>
</organism>
<comment type="function">
    <text evidence="1">Has flap endonuclease activity. During DNA replication, flap endonucleases cleave the 5'-overhanging flap structure that is generated by displacement synthesis when DNA polymerase encounters the 5'-end of a downstream Okazaki fragment.</text>
</comment>
<comment type="cofactor">
    <cofactor evidence="1">
        <name>Mg(2+)</name>
        <dbReference type="ChEBI" id="CHEBI:18420"/>
    </cofactor>
    <text evidence="1">Binds 2 Mg(2+) per subunit. Only one magnesium ion has a direct interaction with the protein, the other interactions are indirect.</text>
</comment>
<comment type="cofactor">
    <cofactor evidence="1">
        <name>K(+)</name>
        <dbReference type="ChEBI" id="CHEBI:29103"/>
    </cofactor>
    <text evidence="1">Binds 1 K(+) per subunit. The potassium ion strongly increases the affinity for DNA.</text>
</comment>
<comment type="similarity">
    <text evidence="1">Belongs to the Xni family.</text>
</comment>
<comment type="sequence caution" evidence="2">
    <conflict type="erroneous initiation">
        <sequence resource="EMBL-CDS" id="AAL21851"/>
    </conflict>
    <text>Extended N-terminus.</text>
</comment>
<reference key="1">
    <citation type="journal article" date="2001" name="Nature">
        <title>Complete genome sequence of Salmonella enterica serovar Typhimurium LT2.</title>
        <authorList>
            <person name="McClelland M."/>
            <person name="Sanderson K.E."/>
            <person name="Spieth J."/>
            <person name="Clifton S.W."/>
            <person name="Latreille P."/>
            <person name="Courtney L."/>
            <person name="Porwollik S."/>
            <person name="Ali J."/>
            <person name="Dante M."/>
            <person name="Du F."/>
            <person name="Hou S."/>
            <person name="Layman D."/>
            <person name="Leonard S."/>
            <person name="Nguyen C."/>
            <person name="Scott K."/>
            <person name="Holmes A."/>
            <person name="Grewal N."/>
            <person name="Mulvaney E."/>
            <person name="Ryan E."/>
            <person name="Sun H."/>
            <person name="Florea L."/>
            <person name="Miller W."/>
            <person name="Stoneking T."/>
            <person name="Nhan M."/>
            <person name="Waterston R."/>
            <person name="Wilson R.K."/>
        </authorList>
    </citation>
    <scope>NUCLEOTIDE SEQUENCE [LARGE SCALE GENOMIC DNA]</scope>
    <source>
        <strain>LT2 / SGSC1412 / ATCC 700720</strain>
    </source>
</reference>
<protein>
    <recommendedName>
        <fullName evidence="1">Flap endonuclease Xni</fullName>
        <shortName evidence="1">FEN</shortName>
        <ecNumber evidence="1">3.1.-.-</ecNumber>
    </recommendedName>
</protein>
<sequence length="251" mass="28150">MAAHLLIVDALNLIRRIHAVQGSPCVETCQHALDQLIIHSQPTHAVAVFDDDARSSGWRHQRLPDYKAGRPPMPDDLHNEMPALRAAFEQRGVRCWASDGNEADDLAATLALKVTEAGHQATIVSTDKGYCQLLSPGLRIRDYFQKRWLDAPFIEKEFGVLPRQLPDYWGLAGISSSKVPGVAGIGPKSATQLLIQFQNLEGIYAHLDEVPEKWRKKLETHKEMAFLCRDIARLQTDLHIDGNLQQLRLAR</sequence>
<gene>
    <name evidence="1" type="primary">xni</name>
    <name evidence="1" type="synonym">ygdG</name>
    <name type="ordered locus">STM2972</name>
</gene>